<protein>
    <recommendedName>
        <fullName evidence="1">Elongation factor P-like protein</fullName>
    </recommendedName>
</protein>
<accession>Q66CT6</accession>
<sequence length="190" mass="21271">MAKANEIKRGMAVNLNGKLLLVKDIDVQSPSARGASTLYKMRFSDVRTGLKVEERFKGDENLDTITLTRRAVNFSYIDGDEYVFMDDEDYTPYNFKKEQIEDELLFIPEGGMPGMQVLTMEGQLLALELPQTVDMEIVDTAPSIKGASASARNKPAIMSTGLSIQVPEYISPGEKIRIHIAERRYMGRAD</sequence>
<gene>
    <name type="ordered locus">YPTB1316</name>
</gene>
<evidence type="ECO:0000255" key="1">
    <source>
        <dbReference type="HAMAP-Rule" id="MF_00646"/>
    </source>
</evidence>
<reference key="1">
    <citation type="journal article" date="2004" name="Proc. Natl. Acad. Sci. U.S.A.">
        <title>Insights into the evolution of Yersinia pestis through whole-genome comparison with Yersinia pseudotuberculosis.</title>
        <authorList>
            <person name="Chain P.S.G."/>
            <person name="Carniel E."/>
            <person name="Larimer F.W."/>
            <person name="Lamerdin J."/>
            <person name="Stoutland P.O."/>
            <person name="Regala W.M."/>
            <person name="Georgescu A.M."/>
            <person name="Vergez L.M."/>
            <person name="Land M.L."/>
            <person name="Motin V.L."/>
            <person name="Brubaker R.R."/>
            <person name="Fowler J."/>
            <person name="Hinnebusch J."/>
            <person name="Marceau M."/>
            <person name="Medigue C."/>
            <person name="Simonet M."/>
            <person name="Chenal-Francisque V."/>
            <person name="Souza B."/>
            <person name="Dacheux D."/>
            <person name="Elliott J.M."/>
            <person name="Derbise A."/>
            <person name="Hauser L.J."/>
            <person name="Garcia E."/>
        </authorList>
    </citation>
    <scope>NUCLEOTIDE SEQUENCE [LARGE SCALE GENOMIC DNA]</scope>
    <source>
        <strain>IP32953</strain>
    </source>
</reference>
<comment type="similarity">
    <text evidence="1">Belongs to the elongation factor P family.</text>
</comment>
<dbReference type="EMBL" id="BX936398">
    <property type="protein sequence ID" value="CAH20556.1"/>
    <property type="molecule type" value="Genomic_DNA"/>
</dbReference>
<dbReference type="SMR" id="Q66CT6"/>
<dbReference type="KEGG" id="ypo:BZ17_1205"/>
<dbReference type="KEGG" id="yps:YPTB1316"/>
<dbReference type="PATRIC" id="fig|273123.14.peg.1286"/>
<dbReference type="Proteomes" id="UP000001011">
    <property type="component" value="Chromosome"/>
</dbReference>
<dbReference type="GO" id="GO:0005737">
    <property type="term" value="C:cytoplasm"/>
    <property type="evidence" value="ECO:0007669"/>
    <property type="project" value="InterPro"/>
</dbReference>
<dbReference type="GO" id="GO:0003746">
    <property type="term" value="F:translation elongation factor activity"/>
    <property type="evidence" value="ECO:0007669"/>
    <property type="project" value="UniProtKB-UniRule"/>
</dbReference>
<dbReference type="GO" id="GO:0043043">
    <property type="term" value="P:peptide biosynthetic process"/>
    <property type="evidence" value="ECO:0007669"/>
    <property type="project" value="InterPro"/>
</dbReference>
<dbReference type="CDD" id="cd04470">
    <property type="entry name" value="S1_EF-P_repeat_1"/>
    <property type="match status" value="1"/>
</dbReference>
<dbReference type="CDD" id="cd05794">
    <property type="entry name" value="S1_EF-P_repeat_2"/>
    <property type="match status" value="1"/>
</dbReference>
<dbReference type="FunFam" id="2.40.50.140:FF:000004">
    <property type="entry name" value="Elongation factor P"/>
    <property type="match status" value="1"/>
</dbReference>
<dbReference type="FunFam" id="2.30.30.30:FF:000011">
    <property type="entry name" value="Elongation factor P-like protein"/>
    <property type="match status" value="1"/>
</dbReference>
<dbReference type="FunFam" id="2.40.50.140:FF:000053">
    <property type="entry name" value="Elongation factor P-like protein"/>
    <property type="match status" value="1"/>
</dbReference>
<dbReference type="Gene3D" id="2.30.30.30">
    <property type="match status" value="1"/>
</dbReference>
<dbReference type="Gene3D" id="2.40.50.140">
    <property type="entry name" value="Nucleic acid-binding proteins"/>
    <property type="match status" value="2"/>
</dbReference>
<dbReference type="HAMAP" id="MF_00646">
    <property type="entry name" value="EFP"/>
    <property type="match status" value="1"/>
</dbReference>
<dbReference type="InterPro" id="IPR015365">
    <property type="entry name" value="Elong-fact-P_C"/>
</dbReference>
<dbReference type="InterPro" id="IPR012340">
    <property type="entry name" value="NA-bd_OB-fold"/>
</dbReference>
<dbReference type="InterPro" id="IPR014722">
    <property type="entry name" value="Rib_uL2_dom2"/>
</dbReference>
<dbReference type="InterPro" id="IPR020599">
    <property type="entry name" value="Transl_elong_fac_P/YeiP"/>
</dbReference>
<dbReference type="InterPro" id="IPR013185">
    <property type="entry name" value="Transl_elong_KOW-like"/>
</dbReference>
<dbReference type="InterPro" id="IPR011897">
    <property type="entry name" value="Transl_elong_p-like_YeiP"/>
</dbReference>
<dbReference type="InterPro" id="IPR001059">
    <property type="entry name" value="Transl_elong_P/YeiP_cen"/>
</dbReference>
<dbReference type="InterPro" id="IPR013852">
    <property type="entry name" value="Transl_elong_P/YeiP_CS"/>
</dbReference>
<dbReference type="InterPro" id="IPR008991">
    <property type="entry name" value="Translation_prot_SH3-like_sf"/>
</dbReference>
<dbReference type="NCBIfam" id="NF001810">
    <property type="entry name" value="PRK00529.1"/>
    <property type="match status" value="1"/>
</dbReference>
<dbReference type="NCBIfam" id="NF003392">
    <property type="entry name" value="PRK04542.1"/>
    <property type="match status" value="1"/>
</dbReference>
<dbReference type="NCBIfam" id="TIGR02178">
    <property type="entry name" value="yeiP"/>
    <property type="match status" value="1"/>
</dbReference>
<dbReference type="PANTHER" id="PTHR30053">
    <property type="entry name" value="ELONGATION FACTOR P"/>
    <property type="match status" value="1"/>
</dbReference>
<dbReference type="PANTHER" id="PTHR30053:SF14">
    <property type="entry name" value="TRANSLATION ELONGATION FACTOR KOW-LIKE DOMAIN-CONTAINING PROTEIN"/>
    <property type="match status" value="1"/>
</dbReference>
<dbReference type="Pfam" id="PF01132">
    <property type="entry name" value="EFP"/>
    <property type="match status" value="1"/>
</dbReference>
<dbReference type="Pfam" id="PF08207">
    <property type="entry name" value="EFP_N"/>
    <property type="match status" value="1"/>
</dbReference>
<dbReference type="Pfam" id="PF09285">
    <property type="entry name" value="Elong-fact-P_C"/>
    <property type="match status" value="1"/>
</dbReference>
<dbReference type="PIRSF" id="PIRSF005901">
    <property type="entry name" value="EF-P"/>
    <property type="match status" value="1"/>
</dbReference>
<dbReference type="SMART" id="SM01185">
    <property type="entry name" value="EFP"/>
    <property type="match status" value="1"/>
</dbReference>
<dbReference type="SMART" id="SM00841">
    <property type="entry name" value="Elong-fact-P_C"/>
    <property type="match status" value="1"/>
</dbReference>
<dbReference type="SUPFAM" id="SSF50249">
    <property type="entry name" value="Nucleic acid-binding proteins"/>
    <property type="match status" value="2"/>
</dbReference>
<dbReference type="SUPFAM" id="SSF50104">
    <property type="entry name" value="Translation proteins SH3-like domain"/>
    <property type="match status" value="1"/>
</dbReference>
<dbReference type="PROSITE" id="PS01275">
    <property type="entry name" value="EFP"/>
    <property type="match status" value="1"/>
</dbReference>
<organism>
    <name type="scientific">Yersinia pseudotuberculosis serotype I (strain IP32953)</name>
    <dbReference type="NCBI Taxonomy" id="273123"/>
    <lineage>
        <taxon>Bacteria</taxon>
        <taxon>Pseudomonadati</taxon>
        <taxon>Pseudomonadota</taxon>
        <taxon>Gammaproteobacteria</taxon>
        <taxon>Enterobacterales</taxon>
        <taxon>Yersiniaceae</taxon>
        <taxon>Yersinia</taxon>
    </lineage>
</organism>
<proteinExistence type="inferred from homology"/>
<feature type="chain" id="PRO_0000094399" description="Elongation factor P-like protein">
    <location>
        <begin position="1"/>
        <end position="190"/>
    </location>
</feature>
<name>EFPL_YERPS</name>